<feature type="chain" id="PRO_0000218970" description="Serine incorporator 3">
    <location>
        <begin position="1"/>
        <end position="473"/>
    </location>
</feature>
<feature type="topological domain" description="Extracellular" evidence="3">
    <location>
        <begin position="1"/>
        <end position="96"/>
    </location>
</feature>
<feature type="transmembrane region" description="Helical" evidence="3">
    <location>
        <begin position="97"/>
        <end position="117"/>
    </location>
</feature>
<feature type="topological domain" description="Cytoplasmic" evidence="3">
    <location>
        <begin position="118"/>
        <end position="132"/>
    </location>
</feature>
<feature type="transmembrane region" description="Helical" evidence="3">
    <location>
        <begin position="133"/>
        <end position="153"/>
    </location>
</feature>
<feature type="topological domain" description="Extracellular" evidence="3">
    <location>
        <begin position="154"/>
        <end position="159"/>
    </location>
</feature>
<feature type="transmembrane region" description="Helical" evidence="3">
    <location>
        <begin position="160"/>
        <end position="180"/>
    </location>
</feature>
<feature type="topological domain" description="Cytoplasmic" evidence="3">
    <location>
        <begin position="181"/>
        <end position="203"/>
    </location>
</feature>
<feature type="transmembrane region" description="Helical" evidence="3">
    <location>
        <begin position="204"/>
        <end position="224"/>
    </location>
</feature>
<feature type="topological domain" description="Extracellular" evidence="3">
    <location>
        <begin position="225"/>
        <end position="239"/>
    </location>
</feature>
<feature type="transmembrane region" description="Helical" evidence="3">
    <location>
        <begin position="240"/>
        <end position="260"/>
    </location>
</feature>
<feature type="topological domain" description="Cytoplasmic" evidence="3">
    <location>
        <begin position="261"/>
        <end position="329"/>
    </location>
</feature>
<feature type="transmembrane region" description="Helical" evidence="3">
    <location>
        <begin position="330"/>
        <end position="350"/>
    </location>
</feature>
<feature type="topological domain" description="Extracellular" evidence="3">
    <location>
        <begin position="351"/>
        <end position="406"/>
    </location>
</feature>
<feature type="transmembrane region" description="Helical" evidence="3">
    <location>
        <begin position="407"/>
        <end position="427"/>
    </location>
</feature>
<feature type="topological domain" description="Cytoplasmic" evidence="3">
    <location>
        <begin position="428"/>
        <end position="446"/>
    </location>
</feature>
<feature type="transmembrane region" description="Helical" evidence="3">
    <location>
        <begin position="447"/>
        <end position="467"/>
    </location>
</feature>
<feature type="topological domain" description="Extracellular" evidence="3">
    <location>
        <begin position="468"/>
        <end position="473"/>
    </location>
</feature>
<feature type="modified residue" description="Phosphoserine" evidence="1">
    <location>
        <position position="371"/>
    </location>
</feature>
<feature type="glycosylation site" description="N-linked (GlcNAc...) asparagine" evidence="3">
    <location>
        <position position="34"/>
    </location>
</feature>
<feature type="splice variant" id="VSP_056833" description="In isoform 2." evidence="9">
    <location>
        <begin position="1"/>
        <end position="55"/>
    </location>
</feature>
<feature type="sequence variant" id="VAR_014315" evidence="4">
    <original>T</original>
    <variation>A</variation>
    <location>
        <position position="437"/>
    </location>
</feature>
<reference key="1">
    <citation type="journal article" date="1999" name="Mol. Carcinog.">
        <title>The human TDE gene homologue: localization to 20q13.1-13.3 and variable expression in human tumor cell lines and tissue.</title>
        <authorList>
            <person name="Bossolasco M."/>
            <person name="Lebel M."/>
            <person name="Lemieux N."/>
            <person name="Mes-Masson A.-M."/>
        </authorList>
    </citation>
    <scope>NUCLEOTIDE SEQUENCE [MRNA] (ISOFORM 1)</scope>
    <scope>TISSUE SPECIFICITY</scope>
    <scope>VARIANT ALA-437</scope>
    <source>
        <tissue>Placenta</tissue>
    </source>
</reference>
<reference key="2">
    <citation type="submission" date="1996-02" db="EMBL/GenBank/DDBJ databases">
        <authorList>
            <person name="Dakuor J."/>
            <person name="Li H."/>
            <person name="Morrish D.W."/>
        </authorList>
    </citation>
    <scope>NUCLEOTIDE SEQUENCE [MRNA] (ISOFORM 1)</scope>
    <source>
        <tissue>Placenta</tissue>
    </source>
</reference>
<reference key="3">
    <citation type="submission" date="1999-05" db="EMBL/GenBank/DDBJ databases">
        <title>Hypothetical human protein SBBI99.</title>
        <authorList>
            <person name="Zhang W."/>
            <person name="Wan T."/>
            <person name="Cao X."/>
        </authorList>
    </citation>
    <scope>NUCLEOTIDE SEQUENCE [MRNA] (ISOFORM 1)</scope>
</reference>
<reference key="4">
    <citation type="journal article" date="2004" name="Nat. Genet.">
        <title>Complete sequencing and characterization of 21,243 full-length human cDNAs.</title>
        <authorList>
            <person name="Ota T."/>
            <person name="Suzuki Y."/>
            <person name="Nishikawa T."/>
            <person name="Otsuki T."/>
            <person name="Sugiyama T."/>
            <person name="Irie R."/>
            <person name="Wakamatsu A."/>
            <person name="Hayashi K."/>
            <person name="Sato H."/>
            <person name="Nagai K."/>
            <person name="Kimura K."/>
            <person name="Makita H."/>
            <person name="Sekine M."/>
            <person name="Obayashi M."/>
            <person name="Nishi T."/>
            <person name="Shibahara T."/>
            <person name="Tanaka T."/>
            <person name="Ishii S."/>
            <person name="Yamamoto J."/>
            <person name="Saito K."/>
            <person name="Kawai Y."/>
            <person name="Isono Y."/>
            <person name="Nakamura Y."/>
            <person name="Nagahari K."/>
            <person name="Murakami K."/>
            <person name="Yasuda T."/>
            <person name="Iwayanagi T."/>
            <person name="Wagatsuma M."/>
            <person name="Shiratori A."/>
            <person name="Sudo H."/>
            <person name="Hosoiri T."/>
            <person name="Kaku Y."/>
            <person name="Kodaira H."/>
            <person name="Kondo H."/>
            <person name="Sugawara M."/>
            <person name="Takahashi M."/>
            <person name="Kanda K."/>
            <person name="Yokoi T."/>
            <person name="Furuya T."/>
            <person name="Kikkawa E."/>
            <person name="Omura Y."/>
            <person name="Abe K."/>
            <person name="Kamihara K."/>
            <person name="Katsuta N."/>
            <person name="Sato K."/>
            <person name="Tanikawa M."/>
            <person name="Yamazaki M."/>
            <person name="Ninomiya K."/>
            <person name="Ishibashi T."/>
            <person name="Yamashita H."/>
            <person name="Murakawa K."/>
            <person name="Fujimori K."/>
            <person name="Tanai H."/>
            <person name="Kimata M."/>
            <person name="Watanabe M."/>
            <person name="Hiraoka S."/>
            <person name="Chiba Y."/>
            <person name="Ishida S."/>
            <person name="Ono Y."/>
            <person name="Takiguchi S."/>
            <person name="Watanabe S."/>
            <person name="Yosida M."/>
            <person name="Hotuta T."/>
            <person name="Kusano J."/>
            <person name="Kanehori K."/>
            <person name="Takahashi-Fujii A."/>
            <person name="Hara H."/>
            <person name="Tanase T.-O."/>
            <person name="Nomura Y."/>
            <person name="Togiya S."/>
            <person name="Komai F."/>
            <person name="Hara R."/>
            <person name="Takeuchi K."/>
            <person name="Arita M."/>
            <person name="Imose N."/>
            <person name="Musashino K."/>
            <person name="Yuuki H."/>
            <person name="Oshima A."/>
            <person name="Sasaki N."/>
            <person name="Aotsuka S."/>
            <person name="Yoshikawa Y."/>
            <person name="Matsunawa H."/>
            <person name="Ichihara T."/>
            <person name="Shiohata N."/>
            <person name="Sano S."/>
            <person name="Moriya S."/>
            <person name="Momiyama H."/>
            <person name="Satoh N."/>
            <person name="Takami S."/>
            <person name="Terashima Y."/>
            <person name="Suzuki O."/>
            <person name="Nakagawa S."/>
            <person name="Senoh A."/>
            <person name="Mizoguchi H."/>
            <person name="Goto Y."/>
            <person name="Shimizu F."/>
            <person name="Wakebe H."/>
            <person name="Hishigaki H."/>
            <person name="Watanabe T."/>
            <person name="Sugiyama A."/>
            <person name="Takemoto M."/>
            <person name="Kawakami B."/>
            <person name="Yamazaki M."/>
            <person name="Watanabe K."/>
            <person name="Kumagai A."/>
            <person name="Itakura S."/>
            <person name="Fukuzumi Y."/>
            <person name="Fujimori Y."/>
            <person name="Komiyama M."/>
            <person name="Tashiro H."/>
            <person name="Tanigami A."/>
            <person name="Fujiwara T."/>
            <person name="Ono T."/>
            <person name="Yamada K."/>
            <person name="Fujii Y."/>
            <person name="Ozaki K."/>
            <person name="Hirao M."/>
            <person name="Ohmori Y."/>
            <person name="Kawabata A."/>
            <person name="Hikiji T."/>
            <person name="Kobatake N."/>
            <person name="Inagaki H."/>
            <person name="Ikema Y."/>
            <person name="Okamoto S."/>
            <person name="Okitani R."/>
            <person name="Kawakami T."/>
            <person name="Noguchi S."/>
            <person name="Itoh T."/>
            <person name="Shigeta K."/>
            <person name="Senba T."/>
            <person name="Matsumura K."/>
            <person name="Nakajima Y."/>
            <person name="Mizuno T."/>
            <person name="Morinaga M."/>
            <person name="Sasaki M."/>
            <person name="Togashi T."/>
            <person name="Oyama M."/>
            <person name="Hata H."/>
            <person name="Watanabe M."/>
            <person name="Komatsu T."/>
            <person name="Mizushima-Sugano J."/>
            <person name="Satoh T."/>
            <person name="Shirai Y."/>
            <person name="Takahashi Y."/>
            <person name="Nakagawa K."/>
            <person name="Okumura K."/>
            <person name="Nagase T."/>
            <person name="Nomura N."/>
            <person name="Kikuchi H."/>
            <person name="Masuho Y."/>
            <person name="Yamashita R."/>
            <person name="Nakai K."/>
            <person name="Yada T."/>
            <person name="Nakamura Y."/>
            <person name="Ohara O."/>
            <person name="Isogai T."/>
            <person name="Sugano S."/>
        </authorList>
    </citation>
    <scope>NUCLEOTIDE SEQUENCE [LARGE SCALE MRNA] (ISOFORM 2)</scope>
</reference>
<reference key="5">
    <citation type="journal article" date="2001" name="Nature">
        <title>The DNA sequence and comparative analysis of human chromosome 20.</title>
        <authorList>
            <person name="Deloukas P."/>
            <person name="Matthews L.H."/>
            <person name="Ashurst J.L."/>
            <person name="Burton J."/>
            <person name="Gilbert J.G.R."/>
            <person name="Jones M."/>
            <person name="Stavrides G."/>
            <person name="Almeida J.P."/>
            <person name="Babbage A.K."/>
            <person name="Bagguley C.L."/>
            <person name="Bailey J."/>
            <person name="Barlow K.F."/>
            <person name="Bates K.N."/>
            <person name="Beard L.M."/>
            <person name="Beare D.M."/>
            <person name="Beasley O.P."/>
            <person name="Bird C.P."/>
            <person name="Blakey S.E."/>
            <person name="Bridgeman A.M."/>
            <person name="Brown A.J."/>
            <person name="Buck D."/>
            <person name="Burrill W.D."/>
            <person name="Butler A.P."/>
            <person name="Carder C."/>
            <person name="Carter N.P."/>
            <person name="Chapman J.C."/>
            <person name="Clamp M."/>
            <person name="Clark G."/>
            <person name="Clark L.N."/>
            <person name="Clark S.Y."/>
            <person name="Clee C.M."/>
            <person name="Clegg S."/>
            <person name="Cobley V.E."/>
            <person name="Collier R.E."/>
            <person name="Connor R.E."/>
            <person name="Corby N.R."/>
            <person name="Coulson A."/>
            <person name="Coville G.J."/>
            <person name="Deadman R."/>
            <person name="Dhami P.D."/>
            <person name="Dunn M."/>
            <person name="Ellington A.G."/>
            <person name="Frankland J.A."/>
            <person name="Fraser A."/>
            <person name="French L."/>
            <person name="Garner P."/>
            <person name="Grafham D.V."/>
            <person name="Griffiths C."/>
            <person name="Griffiths M.N.D."/>
            <person name="Gwilliam R."/>
            <person name="Hall R.E."/>
            <person name="Hammond S."/>
            <person name="Harley J.L."/>
            <person name="Heath P.D."/>
            <person name="Ho S."/>
            <person name="Holden J.L."/>
            <person name="Howden P.J."/>
            <person name="Huckle E."/>
            <person name="Hunt A.R."/>
            <person name="Hunt S.E."/>
            <person name="Jekosch K."/>
            <person name="Johnson C.M."/>
            <person name="Johnson D."/>
            <person name="Kay M.P."/>
            <person name="Kimberley A.M."/>
            <person name="King A."/>
            <person name="Knights A."/>
            <person name="Laird G.K."/>
            <person name="Lawlor S."/>
            <person name="Lehvaeslaiho M.H."/>
            <person name="Leversha M.A."/>
            <person name="Lloyd C."/>
            <person name="Lloyd D.M."/>
            <person name="Lovell J.D."/>
            <person name="Marsh V.L."/>
            <person name="Martin S.L."/>
            <person name="McConnachie L.J."/>
            <person name="McLay K."/>
            <person name="McMurray A.A."/>
            <person name="Milne S.A."/>
            <person name="Mistry D."/>
            <person name="Moore M.J.F."/>
            <person name="Mullikin J.C."/>
            <person name="Nickerson T."/>
            <person name="Oliver K."/>
            <person name="Parker A."/>
            <person name="Patel R."/>
            <person name="Pearce T.A.V."/>
            <person name="Peck A.I."/>
            <person name="Phillimore B.J.C.T."/>
            <person name="Prathalingam S.R."/>
            <person name="Plumb R.W."/>
            <person name="Ramsay H."/>
            <person name="Rice C.M."/>
            <person name="Ross M.T."/>
            <person name="Scott C.E."/>
            <person name="Sehra H.K."/>
            <person name="Shownkeen R."/>
            <person name="Sims S."/>
            <person name="Skuce C.D."/>
            <person name="Smith M.L."/>
            <person name="Soderlund C."/>
            <person name="Steward C.A."/>
            <person name="Sulston J.E."/>
            <person name="Swann R.M."/>
            <person name="Sycamore N."/>
            <person name="Taylor R."/>
            <person name="Tee L."/>
            <person name="Thomas D.W."/>
            <person name="Thorpe A."/>
            <person name="Tracey A."/>
            <person name="Tromans A.C."/>
            <person name="Vaudin M."/>
            <person name="Wall M."/>
            <person name="Wallis J.M."/>
            <person name="Whitehead S.L."/>
            <person name="Whittaker P."/>
            <person name="Willey D.L."/>
            <person name="Williams L."/>
            <person name="Williams S.A."/>
            <person name="Wilming L."/>
            <person name="Wray P.W."/>
            <person name="Hubbard T."/>
            <person name="Durbin R.M."/>
            <person name="Bentley D.R."/>
            <person name="Beck S."/>
            <person name="Rogers J."/>
        </authorList>
    </citation>
    <scope>NUCLEOTIDE SEQUENCE [LARGE SCALE GENOMIC DNA]</scope>
</reference>
<reference key="6">
    <citation type="journal article" date="2004" name="Genome Res.">
        <title>The status, quality, and expansion of the NIH full-length cDNA project: the Mammalian Gene Collection (MGC).</title>
        <authorList>
            <consortium name="The MGC Project Team"/>
        </authorList>
    </citation>
    <scope>NUCLEOTIDE SEQUENCE [LARGE SCALE MRNA] (ISOFORM 1)</scope>
    <source>
        <tissue>Pancreas</tissue>
    </source>
</reference>
<reference key="7">
    <citation type="journal article" date="2015" name="Nature">
        <title>SERINC3 and SERINC5 restrict HIV-1 infectivity and are counteracted by Nef.</title>
        <authorList>
            <person name="Usami Y."/>
            <person name="Wu Y."/>
            <person name="Goettlinger H.G."/>
        </authorList>
    </citation>
    <scope>FUNCTION</scope>
    <scope>SUBCELLULAR LOCATION</scope>
</reference>
<reference key="8">
    <citation type="journal article" date="2015" name="Nature">
        <title>HIV-1 Nef promotes infection by excluding SERINC5 from virion incorporation.</title>
        <authorList>
            <person name="Rosa A."/>
            <person name="Chande A."/>
            <person name="Ziglio S."/>
            <person name="De Sanctis V."/>
            <person name="Bertorelli R."/>
            <person name="Goh S.L."/>
            <person name="McCauley S.M."/>
            <person name="Nowosielska A."/>
            <person name="Antonarakis S.E."/>
            <person name="Luban J."/>
            <person name="Santoni F.A."/>
            <person name="Pizzato M."/>
        </authorList>
    </citation>
    <scope>FUNCTION</scope>
    <scope>SUBCELLULAR LOCATION</scope>
    <scope>SUBCELLULAR LOCATION (MICROBIAL INFECTION)</scope>
</reference>
<reference evidence="14 15" key="9">
    <citation type="journal article" date="2023" name="Nat. Commun.">
        <title>Antiviral HIV-1 SERINC restriction factors disrupt virus membrane asymmetry.</title>
        <authorList>
            <person name="Leonhardt S.A."/>
            <person name="Purdy M.D."/>
            <person name="Grover J.R."/>
            <person name="Yang Z."/>
            <person name="Poulos S."/>
            <person name="McIntire W.E."/>
            <person name="Tatham E.A."/>
            <person name="Erramilli S.K."/>
            <person name="Nosol K."/>
            <person name="Lai K.K."/>
            <person name="Ding S."/>
            <person name="Lu M."/>
            <person name="Uchil P.D."/>
            <person name="Finzi A."/>
            <person name="Rein A."/>
            <person name="Kossiakoff A.A."/>
            <person name="Mothes W."/>
            <person name="Yeager M."/>
        </authorList>
    </citation>
    <scope>STRUCTURE BY ELECTRON MICROSCOPY (4.40 ANGSTROMS)</scope>
    <scope>FUNCTION</scope>
    <scope>CATALYTIC ACTIVITY</scope>
    <scope>SUBCELLULAR LOCATION</scope>
</reference>
<dbReference type="EMBL" id="AF112227">
    <property type="protein sequence ID" value="AAD22448.1"/>
    <property type="molecule type" value="mRNA"/>
</dbReference>
<dbReference type="EMBL" id="U49188">
    <property type="protein sequence ID" value="AAB48858.1"/>
    <property type="status" value="ALT_FRAME"/>
    <property type="molecule type" value="mRNA"/>
</dbReference>
<dbReference type="EMBL" id="AF153979">
    <property type="protein sequence ID" value="AAD34641.1"/>
    <property type="status" value="ALT_FRAME"/>
    <property type="molecule type" value="mRNA"/>
</dbReference>
<dbReference type="EMBL" id="AK300618">
    <property type="protein sequence ID" value="BAG62311.1"/>
    <property type="molecule type" value="mRNA"/>
</dbReference>
<dbReference type="EMBL" id="Z97053">
    <property type="status" value="NOT_ANNOTATED_CDS"/>
    <property type="molecule type" value="Genomic_DNA"/>
</dbReference>
<dbReference type="EMBL" id="BC006088">
    <property type="protein sequence ID" value="AAH06088.1"/>
    <property type="molecule type" value="mRNA"/>
</dbReference>
<dbReference type="CCDS" id="CCDS13333.1">
    <molecule id="Q13530-1"/>
</dbReference>
<dbReference type="RefSeq" id="NP_006802.1">
    <molecule id="Q13530-1"/>
    <property type="nucleotide sequence ID" value="NM_006811.4"/>
</dbReference>
<dbReference type="RefSeq" id="NP_945179.1">
    <molecule id="Q13530-1"/>
    <property type="nucleotide sequence ID" value="NM_198941.3"/>
</dbReference>
<dbReference type="RefSeq" id="XP_016883090.1">
    <property type="nucleotide sequence ID" value="XM_017027601.1"/>
</dbReference>
<dbReference type="PDB" id="7RU6">
    <property type="method" value="EM"/>
    <property type="resolution" value="4.40 A"/>
    <property type="chains" value="A=1-473"/>
</dbReference>
<dbReference type="PDB" id="7RUG">
    <property type="method" value="EM"/>
    <property type="resolution" value="4.70 A"/>
    <property type="chains" value="A=1-473"/>
</dbReference>
<dbReference type="PDBsum" id="7RU6"/>
<dbReference type="PDBsum" id="7RUG"/>
<dbReference type="EMDB" id="EMD-24698"/>
<dbReference type="EMDB" id="EMD-24705"/>
<dbReference type="SMR" id="Q13530"/>
<dbReference type="BioGRID" id="116155">
    <property type="interactions" value="19"/>
</dbReference>
<dbReference type="FunCoup" id="Q13530">
    <property type="interactions" value="1758"/>
</dbReference>
<dbReference type="IntAct" id="Q13530">
    <property type="interactions" value="10"/>
</dbReference>
<dbReference type="MINT" id="Q13530"/>
<dbReference type="STRING" id="9606.ENSP00000340243"/>
<dbReference type="TCDB" id="9.A.29.3.4">
    <property type="family name" value="the lantibiotic immunity protein/serine connector (lip/sip) family"/>
</dbReference>
<dbReference type="GlyCosmos" id="Q13530">
    <property type="glycosylation" value="2 sites, 1 glycan"/>
</dbReference>
<dbReference type="GlyGen" id="Q13530">
    <property type="glycosylation" value="6 sites, 1 N-linked glycan (1 site), 3 O-linked glycans (3 sites)"/>
</dbReference>
<dbReference type="iPTMnet" id="Q13530"/>
<dbReference type="PhosphoSitePlus" id="Q13530"/>
<dbReference type="SwissPalm" id="Q13530"/>
<dbReference type="BioMuta" id="SERINC3"/>
<dbReference type="DMDM" id="25453293"/>
<dbReference type="jPOST" id="Q13530"/>
<dbReference type="MassIVE" id="Q13530"/>
<dbReference type="PaxDb" id="9606-ENSP00000340243"/>
<dbReference type="PeptideAtlas" id="Q13530"/>
<dbReference type="ProteomicsDB" id="5183"/>
<dbReference type="ProteomicsDB" id="59520">
    <molecule id="Q13530-1"/>
</dbReference>
<dbReference type="Pumba" id="Q13530"/>
<dbReference type="Antibodypedia" id="43693">
    <property type="antibodies" value="184 antibodies from 28 providers"/>
</dbReference>
<dbReference type="DNASU" id="10955"/>
<dbReference type="Ensembl" id="ENST00000255175.5">
    <molecule id="Q13530-1"/>
    <property type="protein sequence ID" value="ENSP00000255175.1"/>
    <property type="gene ID" value="ENSG00000132824.14"/>
</dbReference>
<dbReference type="Ensembl" id="ENST00000342374.5">
    <molecule id="Q13530-1"/>
    <property type="protein sequence ID" value="ENSP00000340243.4"/>
    <property type="gene ID" value="ENSG00000132824.14"/>
</dbReference>
<dbReference type="GeneID" id="10955"/>
<dbReference type="KEGG" id="hsa:10955"/>
<dbReference type="MANE-Select" id="ENST00000342374.5">
    <property type="protein sequence ID" value="ENSP00000340243.4"/>
    <property type="RefSeq nucleotide sequence ID" value="NM_006811.4"/>
    <property type="RefSeq protein sequence ID" value="NP_006802.1"/>
</dbReference>
<dbReference type="UCSC" id="uc002xme.4">
    <molecule id="Q13530-1"/>
    <property type="organism name" value="human"/>
</dbReference>
<dbReference type="AGR" id="HGNC:11699"/>
<dbReference type="CTD" id="10955"/>
<dbReference type="DisGeNET" id="10955"/>
<dbReference type="GeneCards" id="SERINC3"/>
<dbReference type="HGNC" id="HGNC:11699">
    <property type="gene designation" value="SERINC3"/>
</dbReference>
<dbReference type="HPA" id="ENSG00000132824">
    <property type="expression patterns" value="Low tissue specificity"/>
</dbReference>
<dbReference type="MIM" id="607165">
    <property type="type" value="gene"/>
</dbReference>
<dbReference type="neXtProt" id="NX_Q13530"/>
<dbReference type="OpenTargets" id="ENSG00000132824"/>
<dbReference type="PharmGKB" id="PA36418"/>
<dbReference type="VEuPathDB" id="HostDB:ENSG00000132824"/>
<dbReference type="eggNOG" id="KOG2592">
    <property type="taxonomic scope" value="Eukaryota"/>
</dbReference>
<dbReference type="GeneTree" id="ENSGT01030000234623"/>
<dbReference type="HOGENOM" id="CLU_029574_5_0_1"/>
<dbReference type="InParanoid" id="Q13530"/>
<dbReference type="OMA" id="KSPQWWD"/>
<dbReference type="OrthoDB" id="5963193at2759"/>
<dbReference type="PAN-GO" id="Q13530">
    <property type="GO annotations" value="1 GO annotation based on evolutionary models"/>
</dbReference>
<dbReference type="PhylomeDB" id="Q13530"/>
<dbReference type="TreeFam" id="TF312881"/>
<dbReference type="PathwayCommons" id="Q13530"/>
<dbReference type="Reactome" id="R-HSA-977347">
    <property type="pathway name" value="Serine biosynthesis"/>
</dbReference>
<dbReference type="SignaLink" id="Q13530"/>
<dbReference type="SIGNOR" id="Q13530"/>
<dbReference type="BioGRID-ORCS" id="10955">
    <property type="hits" value="17 hits in 1162 CRISPR screens"/>
</dbReference>
<dbReference type="ChiTaRS" id="SERINC3">
    <property type="organism name" value="human"/>
</dbReference>
<dbReference type="GeneWiki" id="SERINC3"/>
<dbReference type="GenomeRNAi" id="10955"/>
<dbReference type="Pharos" id="Q13530">
    <property type="development level" value="Tbio"/>
</dbReference>
<dbReference type="PRO" id="PR:Q13530"/>
<dbReference type="Proteomes" id="UP000005640">
    <property type="component" value="Chromosome 20"/>
</dbReference>
<dbReference type="RNAct" id="Q13530">
    <property type="molecule type" value="protein"/>
</dbReference>
<dbReference type="Bgee" id="ENSG00000132824">
    <property type="expression patterns" value="Expressed in endothelial cell and 216 other cell types or tissues"/>
</dbReference>
<dbReference type="ExpressionAtlas" id="Q13530">
    <property type="expression patterns" value="baseline and differential"/>
</dbReference>
<dbReference type="GO" id="GO:0000139">
    <property type="term" value="C:Golgi membrane"/>
    <property type="evidence" value="ECO:0007669"/>
    <property type="project" value="UniProtKB-SubCell"/>
</dbReference>
<dbReference type="GO" id="GO:0016020">
    <property type="term" value="C:membrane"/>
    <property type="evidence" value="ECO:0000318"/>
    <property type="project" value="GO_Central"/>
</dbReference>
<dbReference type="GO" id="GO:0048471">
    <property type="term" value="C:perinuclear region of cytoplasm"/>
    <property type="evidence" value="ECO:0007669"/>
    <property type="project" value="UniProtKB-SubCell"/>
</dbReference>
<dbReference type="GO" id="GO:0005886">
    <property type="term" value="C:plasma membrane"/>
    <property type="evidence" value="ECO:0000314"/>
    <property type="project" value="UniProtKB"/>
</dbReference>
<dbReference type="GO" id="GO:0015194">
    <property type="term" value="F:L-serine transmembrane transporter activity"/>
    <property type="evidence" value="ECO:0000304"/>
    <property type="project" value="Reactome"/>
</dbReference>
<dbReference type="GO" id="GO:0017128">
    <property type="term" value="F:phospholipid scramblase activity"/>
    <property type="evidence" value="ECO:0000314"/>
    <property type="project" value="UniProtKB"/>
</dbReference>
<dbReference type="GO" id="GO:0140374">
    <property type="term" value="P:antiviral innate immune response"/>
    <property type="evidence" value="ECO:0000314"/>
    <property type="project" value="UniProtKB"/>
</dbReference>
<dbReference type="GO" id="GO:0006564">
    <property type="term" value="P:L-serine biosynthetic process"/>
    <property type="evidence" value="ECO:0000304"/>
    <property type="project" value="Reactome"/>
</dbReference>
<dbReference type="GO" id="GO:0017121">
    <property type="term" value="P:plasma membrane phospholipid scrambling"/>
    <property type="evidence" value="ECO:0000314"/>
    <property type="project" value="UniProtKB"/>
</dbReference>
<dbReference type="GO" id="GO:1902237">
    <property type="term" value="P:positive regulation of endoplasmic reticulum stress-induced intrinsic apoptotic signaling pathway"/>
    <property type="evidence" value="ECO:0007669"/>
    <property type="project" value="Ensembl"/>
</dbReference>
<dbReference type="InterPro" id="IPR005016">
    <property type="entry name" value="TDE1/TMS"/>
</dbReference>
<dbReference type="PANTHER" id="PTHR10383">
    <property type="entry name" value="SERINE INCORPORATOR"/>
    <property type="match status" value="1"/>
</dbReference>
<dbReference type="PANTHER" id="PTHR10383:SF51">
    <property type="entry name" value="SERINE INCORPORATOR 3"/>
    <property type="match status" value="1"/>
</dbReference>
<dbReference type="Pfam" id="PF03348">
    <property type="entry name" value="Serinc"/>
    <property type="match status" value="1"/>
</dbReference>
<accession>Q13530</accession>
<accession>B4DUE9</accession>
<accession>O43717</accession>
<accession>Q9BR33</accession>
<name>SERC3_HUMAN</name>
<protein>
    <recommendedName>
        <fullName>Serine incorporator 3</fullName>
    </recommendedName>
    <alternativeName>
        <fullName evidence="8">Tumor differentially expressed protein 1</fullName>
    </alternativeName>
</protein>
<organism>
    <name type="scientific">Homo sapiens</name>
    <name type="common">Human</name>
    <dbReference type="NCBI Taxonomy" id="9606"/>
    <lineage>
        <taxon>Eukaryota</taxon>
        <taxon>Metazoa</taxon>
        <taxon>Chordata</taxon>
        <taxon>Craniata</taxon>
        <taxon>Vertebrata</taxon>
        <taxon>Euteleostomi</taxon>
        <taxon>Mammalia</taxon>
        <taxon>Eutheria</taxon>
        <taxon>Euarchontoglires</taxon>
        <taxon>Primates</taxon>
        <taxon>Haplorrhini</taxon>
        <taxon>Catarrhini</taxon>
        <taxon>Hominidae</taxon>
        <taxon>Homo</taxon>
    </lineage>
</organism>
<keyword id="KW-0002">3D-structure</keyword>
<keyword id="KW-0025">Alternative splicing</keyword>
<keyword id="KW-0051">Antiviral defense</keyword>
<keyword id="KW-1003">Cell membrane</keyword>
<keyword id="KW-0963">Cytoplasm</keyword>
<keyword id="KW-0325">Glycoprotein</keyword>
<keyword id="KW-0333">Golgi apparatus</keyword>
<keyword id="KW-0945">Host-virus interaction</keyword>
<keyword id="KW-0391">Immunity</keyword>
<keyword id="KW-0399">Innate immunity</keyword>
<keyword id="KW-0472">Membrane</keyword>
<keyword id="KW-0597">Phosphoprotein</keyword>
<keyword id="KW-1267">Proteomics identification</keyword>
<keyword id="KW-1185">Reference proteome</keyword>
<keyword id="KW-0812">Transmembrane</keyword>
<keyword id="KW-1133">Transmembrane helix</keyword>
<proteinExistence type="evidence at protein level"/>
<sequence length="473" mass="52580">MGAVLGVFSLASWVPCLCSGASCLLCSCCPNSKNSTVTRLIYAFILLLSTVVSYIMQRKEMETYLKKIPGFCEGGFKIHEADINADKDCDVLVGYKAVYRISFAMAIFFFVFSLLMFKVKTSKDLRAAVHNGFWFFKIAALIGIMVGSFYIPGGYFSSVWFVVGMIGAALFILIQLVLLVDFAHSWNESWVNRMEEGNPRLWYAALLSFTSAFYILSIICVGLLYTYYTKPDGCTENKFFISINLILCVVASIISIHPKIQEHQPRSGLLQSSLITLYTMYLTWSAMSNEPDRSCNPNLMSFITRITAPTLAPGNSTAVVPTPTPPSKSGSLLDSDNFIGLFVFVLCLLYSSIRTSTNSQVDKLTLSGSDSVILGDTTTSGASDEEDGQPRRAVDNEKEGVQYSYSLFHLMLCLASLYIMMTLTSWYSPDAKFQSMTSKWPAVWVKISSSWVCLLLYVWTLVAPLVLTSRDFS</sequence>
<gene>
    <name evidence="13" type="primary">SERINC3</name>
    <name type="synonym">DIFF33</name>
    <name evidence="8" type="synonym">TDE1</name>
    <name evidence="10" type="ORF">SBBI99</name>
</gene>
<evidence type="ECO:0000250" key="1">
    <source>
        <dbReference type="UniProtKB" id="Q9NRX5"/>
    </source>
</evidence>
<evidence type="ECO:0000250" key="2">
    <source>
        <dbReference type="UniProtKB" id="Q9QZI9"/>
    </source>
</evidence>
<evidence type="ECO:0000255" key="3"/>
<evidence type="ECO:0000269" key="4">
    <source>
    </source>
</evidence>
<evidence type="ECO:0000269" key="5">
    <source>
    </source>
</evidence>
<evidence type="ECO:0000269" key="6">
    <source>
    </source>
</evidence>
<evidence type="ECO:0000269" key="7">
    <source>
    </source>
</evidence>
<evidence type="ECO:0000303" key="8">
    <source>
    </source>
</evidence>
<evidence type="ECO:0000303" key="9">
    <source>
    </source>
</evidence>
<evidence type="ECO:0000303" key="10">
    <source ref="3"/>
</evidence>
<evidence type="ECO:0000305" key="11"/>
<evidence type="ECO:0000305" key="12">
    <source>
    </source>
</evidence>
<evidence type="ECO:0000312" key="13">
    <source>
        <dbReference type="HGNC" id="HGNC:11699"/>
    </source>
</evidence>
<evidence type="ECO:0007744" key="14">
    <source>
        <dbReference type="PDB" id="7RU6"/>
    </source>
</evidence>
<evidence type="ECO:0007744" key="15">
    <source>
        <dbReference type="PDB" id="7RUG"/>
    </source>
</evidence>
<comment type="function">
    <text evidence="5 6 7">Restriction factor required to restrict infectivity of lentiviruses, such as HIV-1: acts by inhibiting an early step of viral infection. Impairs the penetration of the viral particle into the cytoplasm (PubMed:26416733, PubMed:26416734). Non-ATP-dependent, non-specific lipid transporter for phosphatidylserine, phosphatidylcholine, and phosphatidylethanolamine. Functions as a scramblase that flips lipids in both directions across the membrane. Phospholipid scrambling results in HIV-1 surface exposure of phosphatidylserine and loss of membrane asymmetry, which leads to changes in HIV-1 Env conformation and loss of infectivity (PubMed:37474505).</text>
</comment>
<comment type="catalytic activity">
    <reaction evidence="7">
        <text>a 1,2-diacyl-sn-glycero-3-phospho-L-serine(in) = a 1,2-diacyl-sn-glycero-3-phospho-L-serine(out)</text>
        <dbReference type="Rhea" id="RHEA:38663"/>
        <dbReference type="ChEBI" id="CHEBI:57262"/>
    </reaction>
</comment>
<comment type="catalytic activity">
    <reaction evidence="7">
        <text>a 1,2-diacyl-sn-glycero-3-phosphocholine(in) = a 1,2-diacyl-sn-glycero-3-phosphocholine(out)</text>
        <dbReference type="Rhea" id="RHEA:38571"/>
        <dbReference type="ChEBI" id="CHEBI:57643"/>
    </reaction>
</comment>
<comment type="catalytic activity">
    <reaction evidence="7">
        <text>a 1,2-diacyl-sn-glycero-3-phosphoethanolamine(in) = a 1,2-diacyl-sn-glycero-3-phosphoethanolamine(out)</text>
        <dbReference type="Rhea" id="RHEA:38895"/>
        <dbReference type="ChEBI" id="CHEBI:64612"/>
    </reaction>
</comment>
<comment type="interaction">
    <interactant intactId="EBI-1045571">
        <id>Q13530</id>
    </interactant>
    <interactant intactId="EBI-747754">
        <id>P28799</id>
        <label>GRN</label>
    </interactant>
    <organismsDiffer>false</organismsDiffer>
    <experiments>3</experiments>
</comment>
<comment type="interaction">
    <interactant intactId="EBI-1045571">
        <id>Q13530</id>
    </interactant>
    <interactant intactId="EBI-988601">
        <id>O43933</id>
        <label>PEX1</label>
    </interactant>
    <organismsDiffer>false</organismsDiffer>
    <experiments>3</experiments>
</comment>
<comment type="interaction">
    <interactant intactId="EBI-1045571">
        <id>Q13530</id>
    </interactant>
    <interactant intactId="EBI-720609">
        <id>O76024</id>
        <label>WFS1</label>
    </interactant>
    <organismsDiffer>false</organismsDiffer>
    <experiments>3</experiments>
</comment>
<comment type="subcellular location">
    <subcellularLocation>
        <location evidence="7">Cell membrane</location>
        <topology evidence="3">Multi-pass membrane protein</topology>
    </subcellularLocation>
    <subcellularLocation>
        <location evidence="2">Golgi apparatus membrane</location>
        <topology evidence="2">Multi-pass membrane protein</topology>
    </subcellularLocation>
</comment>
<comment type="subcellular location">
    <subcellularLocation>
        <location evidence="12">Cytoplasm</location>
        <location evidence="12">Perinuclear region</location>
    </subcellularLocation>
    <text evidence="12">(Microbial infection) Upon HIV-1 infection, it is redirected to perinuclear region following interaction with HIV-1 Nef, excluding it from virions particles, thereby preventing subsequent antiviral defense activity (Probable).</text>
</comment>
<comment type="alternative products">
    <event type="alternative splicing"/>
    <isoform>
        <id>Q13530-1</id>
        <name>1</name>
        <sequence type="displayed"/>
    </isoform>
    <isoform>
        <id>Q13530-2</id>
        <name>2</name>
        <sequence type="described" ref="VSP_056833"/>
    </isoform>
</comment>
<comment type="tissue specificity">
    <text evidence="4">Ubiquitous. Expression levels were increased fourfold to tenfold in lung tumor tissues compared with normal pulmonary tissues.</text>
</comment>
<comment type="PTM">
    <text evidence="2">N-glycosylated.</text>
</comment>
<comment type="similarity">
    <text evidence="11">Belongs to the TDE1 family.</text>
</comment>
<comment type="sequence caution" evidence="11">
    <conflict type="frameshift">
        <sequence resource="EMBL-CDS" id="AAB48858"/>
    </conflict>
</comment>
<comment type="sequence caution" evidence="11">
    <conflict type="frameshift">
        <sequence resource="EMBL-CDS" id="AAD34641"/>
    </conflict>
</comment>